<keyword id="KW-0238">DNA-binding</keyword>
<reference key="1">
    <citation type="journal article" date="1999" name="Nat. Genet.">
        <title>Comparative genomes of Chlamydia pneumoniae and C. trachomatis.</title>
        <authorList>
            <person name="Kalman S."/>
            <person name="Mitchell W.P."/>
            <person name="Marathe R."/>
            <person name="Lammel C.J."/>
            <person name="Fan J."/>
            <person name="Hyman R.W."/>
            <person name="Olinger L."/>
            <person name="Grimwood J."/>
            <person name="Davis R.W."/>
            <person name="Stephens R.S."/>
        </authorList>
    </citation>
    <scope>NUCLEOTIDE SEQUENCE [LARGE SCALE GENOMIC DNA]</scope>
    <source>
        <strain>CWL029</strain>
    </source>
</reference>
<reference key="2">
    <citation type="journal article" date="2000" name="Nucleic Acids Res.">
        <title>Genome sequences of Chlamydia trachomatis MoPn and Chlamydia pneumoniae AR39.</title>
        <authorList>
            <person name="Read T.D."/>
            <person name="Brunham R.C."/>
            <person name="Shen C."/>
            <person name="Gill S.R."/>
            <person name="Heidelberg J.F."/>
            <person name="White O."/>
            <person name="Hickey E.K."/>
            <person name="Peterson J.D."/>
            <person name="Utterback T.R."/>
            <person name="Berry K.J."/>
            <person name="Bass S."/>
            <person name="Linher K.D."/>
            <person name="Weidman J.F."/>
            <person name="Khouri H.M."/>
            <person name="Craven B."/>
            <person name="Bowman C."/>
            <person name="Dodson R.J."/>
            <person name="Gwinn M.L."/>
            <person name="Nelson W.C."/>
            <person name="DeBoy R.T."/>
            <person name="Kolonay J.F."/>
            <person name="McClarty G."/>
            <person name="Salzberg S.L."/>
            <person name="Eisen J.A."/>
            <person name="Fraser C.M."/>
        </authorList>
    </citation>
    <scope>NUCLEOTIDE SEQUENCE [LARGE SCALE GENOMIC DNA]</scope>
    <source>
        <strain>AR39</strain>
    </source>
</reference>
<reference key="3">
    <citation type="journal article" date="2000" name="Nucleic Acids Res.">
        <title>Comparison of whole genome sequences of Chlamydia pneumoniae J138 from Japan and CWL029 from USA.</title>
        <authorList>
            <person name="Shirai M."/>
            <person name="Hirakawa H."/>
            <person name="Kimoto M."/>
            <person name="Tabuchi M."/>
            <person name="Kishi F."/>
            <person name="Ouchi K."/>
            <person name="Shiba T."/>
            <person name="Ishii K."/>
            <person name="Hattori M."/>
            <person name="Kuhara S."/>
            <person name="Nakazawa T."/>
        </authorList>
    </citation>
    <scope>NUCLEOTIDE SEQUENCE [LARGE SCALE GENOMIC DNA]</scope>
    <source>
        <strain>J138</strain>
    </source>
</reference>
<reference key="4">
    <citation type="submission" date="2002-05" db="EMBL/GenBank/DDBJ databases">
        <title>The genome sequence of Chlamydia pneumoniae TW183 and comparison with other Chlamydia strains based on whole genome sequence analysis.</title>
        <authorList>
            <person name="Geng M.M."/>
            <person name="Schuhmacher A."/>
            <person name="Muehldorfer I."/>
            <person name="Bensch K.W."/>
            <person name="Schaefer K.P."/>
            <person name="Schneider S."/>
            <person name="Pohl T."/>
            <person name="Essig A."/>
            <person name="Marre R."/>
            <person name="Melchers K."/>
        </authorList>
    </citation>
    <scope>NUCLEOTIDE SEQUENCE [LARGE SCALE GENOMIC DNA]</scope>
    <source>
        <strain>TW-183</strain>
    </source>
</reference>
<sequence length="160" mass="17823">MMFGHFAGYLGADPEERMTSKGKRVITLRLGVKTRVGMKDETVWCKCNIWHNRYDKMLPYLKKGSGVIVAGDISVESYMSKDGSPQSSLVISVDSLKFSPFGRNEGSRSPSLEDNHQQVGYESVSVGFEGEALDAEAIKDKDMYAGYGQEQQYVCEDVPF</sequence>
<feature type="chain" id="PRO_0000096024" description="Single-stranded DNA-binding protein">
    <location>
        <begin position="1"/>
        <end position="160"/>
    </location>
</feature>
<feature type="domain" description="SSB" evidence="1">
    <location>
        <begin position="1"/>
        <end position="100"/>
    </location>
</feature>
<gene>
    <name type="primary">ssb</name>
    <name type="ordered locus">CPn_0386</name>
    <name type="ordered locus">CP_0369</name>
    <name type="ordered locus">CpB0398</name>
</gene>
<accession>Q9Z8F7</accession>
<accession>Q9JQJ1</accession>
<evidence type="ECO:0000255" key="1">
    <source>
        <dbReference type="HAMAP-Rule" id="MF_00984"/>
    </source>
</evidence>
<proteinExistence type="inferred from homology"/>
<protein>
    <recommendedName>
        <fullName evidence="1">Single-stranded DNA-binding protein</fullName>
        <shortName evidence="1">SSB</shortName>
    </recommendedName>
</protein>
<comment type="subunit">
    <text evidence="1">Homotetramer.</text>
</comment>
<name>SSB_CHLPN</name>
<dbReference type="EMBL" id="AE001363">
    <property type="protein sequence ID" value="AAD18530.1"/>
    <property type="molecule type" value="Genomic_DNA"/>
</dbReference>
<dbReference type="EMBL" id="AE002161">
    <property type="protein sequence ID" value="AAF38218.1"/>
    <property type="molecule type" value="Genomic_DNA"/>
</dbReference>
<dbReference type="EMBL" id="BA000008">
    <property type="protein sequence ID" value="BAA98594.1"/>
    <property type="molecule type" value="Genomic_DNA"/>
</dbReference>
<dbReference type="EMBL" id="AE009440">
    <property type="protein sequence ID" value="AAP98329.1"/>
    <property type="molecule type" value="Genomic_DNA"/>
</dbReference>
<dbReference type="PIR" id="H72083">
    <property type="entry name" value="H72083"/>
</dbReference>
<dbReference type="PIR" id="H86538">
    <property type="entry name" value="H86538"/>
</dbReference>
<dbReference type="RefSeq" id="NP_224586.1">
    <property type="nucleotide sequence ID" value="NC_000922.1"/>
</dbReference>
<dbReference type="RefSeq" id="WP_010883029.1">
    <property type="nucleotide sequence ID" value="NZ_LN847257.1"/>
</dbReference>
<dbReference type="SMR" id="Q9Z8F7"/>
<dbReference type="STRING" id="406984.CPK_ORF00896"/>
<dbReference type="GeneID" id="45050433"/>
<dbReference type="KEGG" id="cpa:CP_0369"/>
<dbReference type="KEGG" id="cpj:ssb"/>
<dbReference type="KEGG" id="cpn:CPn_0386"/>
<dbReference type="KEGG" id="cpt:CpB0398"/>
<dbReference type="PATRIC" id="fig|115713.3.peg.428"/>
<dbReference type="eggNOG" id="COG0629">
    <property type="taxonomic scope" value="Bacteria"/>
</dbReference>
<dbReference type="HOGENOM" id="CLU_1666266_0_0_0"/>
<dbReference type="OrthoDB" id="9809878at2"/>
<dbReference type="Proteomes" id="UP000000583">
    <property type="component" value="Chromosome"/>
</dbReference>
<dbReference type="Proteomes" id="UP000000801">
    <property type="component" value="Chromosome"/>
</dbReference>
<dbReference type="GO" id="GO:0009295">
    <property type="term" value="C:nucleoid"/>
    <property type="evidence" value="ECO:0007669"/>
    <property type="project" value="TreeGrafter"/>
</dbReference>
<dbReference type="GO" id="GO:0003697">
    <property type="term" value="F:single-stranded DNA binding"/>
    <property type="evidence" value="ECO:0007669"/>
    <property type="project" value="UniProtKB-UniRule"/>
</dbReference>
<dbReference type="GO" id="GO:0006260">
    <property type="term" value="P:DNA replication"/>
    <property type="evidence" value="ECO:0007669"/>
    <property type="project" value="InterPro"/>
</dbReference>
<dbReference type="CDD" id="cd04496">
    <property type="entry name" value="SSB_OBF"/>
    <property type="match status" value="1"/>
</dbReference>
<dbReference type="Gene3D" id="2.40.50.140">
    <property type="entry name" value="Nucleic acid-binding proteins"/>
    <property type="match status" value="1"/>
</dbReference>
<dbReference type="HAMAP" id="MF_00984">
    <property type="entry name" value="SSB"/>
    <property type="match status" value="1"/>
</dbReference>
<dbReference type="InterPro" id="IPR012340">
    <property type="entry name" value="NA-bd_OB-fold"/>
</dbReference>
<dbReference type="InterPro" id="IPR000424">
    <property type="entry name" value="Primosome_PriB/ssb"/>
</dbReference>
<dbReference type="InterPro" id="IPR011344">
    <property type="entry name" value="ssDNA-bd"/>
</dbReference>
<dbReference type="NCBIfam" id="NF004948">
    <property type="entry name" value="PRK06293.1"/>
    <property type="match status" value="1"/>
</dbReference>
<dbReference type="NCBIfam" id="TIGR00621">
    <property type="entry name" value="ssb"/>
    <property type="match status" value="1"/>
</dbReference>
<dbReference type="PANTHER" id="PTHR10302">
    <property type="entry name" value="SINGLE-STRANDED DNA-BINDING PROTEIN"/>
    <property type="match status" value="1"/>
</dbReference>
<dbReference type="PANTHER" id="PTHR10302:SF27">
    <property type="entry name" value="SINGLE-STRANDED DNA-BINDING PROTEIN"/>
    <property type="match status" value="1"/>
</dbReference>
<dbReference type="Pfam" id="PF00436">
    <property type="entry name" value="SSB"/>
    <property type="match status" value="1"/>
</dbReference>
<dbReference type="PIRSF" id="PIRSF002070">
    <property type="entry name" value="SSB"/>
    <property type="match status" value="1"/>
</dbReference>
<dbReference type="SUPFAM" id="SSF50249">
    <property type="entry name" value="Nucleic acid-binding proteins"/>
    <property type="match status" value="1"/>
</dbReference>
<dbReference type="PROSITE" id="PS50935">
    <property type="entry name" value="SSB"/>
    <property type="match status" value="1"/>
</dbReference>
<organism>
    <name type="scientific">Chlamydia pneumoniae</name>
    <name type="common">Chlamydophila pneumoniae</name>
    <dbReference type="NCBI Taxonomy" id="83558"/>
    <lineage>
        <taxon>Bacteria</taxon>
        <taxon>Pseudomonadati</taxon>
        <taxon>Chlamydiota</taxon>
        <taxon>Chlamydiia</taxon>
        <taxon>Chlamydiales</taxon>
        <taxon>Chlamydiaceae</taxon>
        <taxon>Chlamydia/Chlamydophila group</taxon>
        <taxon>Chlamydia</taxon>
    </lineage>
</organism>